<dbReference type="EC" id="3.1.-.-" evidence="1"/>
<dbReference type="EMBL" id="AE016822">
    <property type="protein sequence ID" value="AAT89272.1"/>
    <property type="molecule type" value="Genomic_DNA"/>
</dbReference>
<dbReference type="RefSeq" id="WP_011186263.1">
    <property type="nucleotide sequence ID" value="NC_006087.1"/>
</dbReference>
<dbReference type="SMR" id="Q6AEC4"/>
<dbReference type="STRING" id="281090.Lxx14600"/>
<dbReference type="KEGG" id="lxx:Lxx14600"/>
<dbReference type="eggNOG" id="COG0319">
    <property type="taxonomic scope" value="Bacteria"/>
</dbReference>
<dbReference type="HOGENOM" id="CLU_106710_3_2_11"/>
<dbReference type="Proteomes" id="UP000001306">
    <property type="component" value="Chromosome"/>
</dbReference>
<dbReference type="GO" id="GO:0005737">
    <property type="term" value="C:cytoplasm"/>
    <property type="evidence" value="ECO:0007669"/>
    <property type="project" value="UniProtKB-SubCell"/>
</dbReference>
<dbReference type="GO" id="GO:0004222">
    <property type="term" value="F:metalloendopeptidase activity"/>
    <property type="evidence" value="ECO:0007669"/>
    <property type="project" value="InterPro"/>
</dbReference>
<dbReference type="GO" id="GO:0004521">
    <property type="term" value="F:RNA endonuclease activity"/>
    <property type="evidence" value="ECO:0007669"/>
    <property type="project" value="UniProtKB-UniRule"/>
</dbReference>
<dbReference type="GO" id="GO:0008270">
    <property type="term" value="F:zinc ion binding"/>
    <property type="evidence" value="ECO:0007669"/>
    <property type="project" value="UniProtKB-UniRule"/>
</dbReference>
<dbReference type="GO" id="GO:0006364">
    <property type="term" value="P:rRNA processing"/>
    <property type="evidence" value="ECO:0007669"/>
    <property type="project" value="UniProtKB-UniRule"/>
</dbReference>
<dbReference type="Gene3D" id="3.40.390.30">
    <property type="entry name" value="Metalloproteases ('zincins'), catalytic domain"/>
    <property type="match status" value="1"/>
</dbReference>
<dbReference type="HAMAP" id="MF_00009">
    <property type="entry name" value="Endoribonucl_YbeY"/>
    <property type="match status" value="1"/>
</dbReference>
<dbReference type="InterPro" id="IPR023091">
    <property type="entry name" value="MetalPrtase_cat_dom_sf_prd"/>
</dbReference>
<dbReference type="InterPro" id="IPR002036">
    <property type="entry name" value="YbeY"/>
</dbReference>
<dbReference type="InterPro" id="IPR020549">
    <property type="entry name" value="YbeY_CS"/>
</dbReference>
<dbReference type="NCBIfam" id="TIGR00043">
    <property type="entry name" value="rRNA maturation RNase YbeY"/>
    <property type="match status" value="1"/>
</dbReference>
<dbReference type="PANTHER" id="PTHR46986">
    <property type="entry name" value="ENDORIBONUCLEASE YBEY, CHLOROPLASTIC"/>
    <property type="match status" value="1"/>
</dbReference>
<dbReference type="PANTHER" id="PTHR46986:SF1">
    <property type="entry name" value="ENDORIBONUCLEASE YBEY, CHLOROPLASTIC"/>
    <property type="match status" value="1"/>
</dbReference>
<dbReference type="Pfam" id="PF02130">
    <property type="entry name" value="YbeY"/>
    <property type="match status" value="1"/>
</dbReference>
<dbReference type="SUPFAM" id="SSF55486">
    <property type="entry name" value="Metalloproteases ('zincins'), catalytic domain"/>
    <property type="match status" value="1"/>
</dbReference>
<dbReference type="PROSITE" id="PS01306">
    <property type="entry name" value="UPF0054"/>
    <property type="match status" value="1"/>
</dbReference>
<protein>
    <recommendedName>
        <fullName evidence="1">Endoribonuclease YbeY</fullName>
        <ecNumber evidence="1">3.1.-.-</ecNumber>
    </recommendedName>
</protein>
<comment type="function">
    <text evidence="1">Single strand-specific metallo-endoribonuclease involved in late-stage 70S ribosome quality control and in maturation of the 3' terminus of the 16S rRNA.</text>
</comment>
<comment type="cofactor">
    <cofactor evidence="1">
        <name>Zn(2+)</name>
        <dbReference type="ChEBI" id="CHEBI:29105"/>
    </cofactor>
    <text evidence="1">Binds 1 zinc ion.</text>
</comment>
<comment type="subcellular location">
    <subcellularLocation>
        <location evidence="1">Cytoplasm</location>
    </subcellularLocation>
</comment>
<comment type="similarity">
    <text evidence="1">Belongs to the endoribonuclease YbeY family.</text>
</comment>
<name>YBEY_LEIXX</name>
<proteinExistence type="inferred from homology"/>
<reference key="1">
    <citation type="journal article" date="2004" name="Mol. Plant Microbe Interact.">
        <title>The genome sequence of the Gram-positive sugarcane pathogen Leifsonia xyli subsp. xyli.</title>
        <authorList>
            <person name="Monteiro-Vitorello C.B."/>
            <person name="Camargo L.E.A."/>
            <person name="Van Sluys M.A."/>
            <person name="Kitajima J.P."/>
            <person name="Truffi D."/>
            <person name="do Amaral A.M."/>
            <person name="Harakava R."/>
            <person name="de Oliveira J.C.F."/>
            <person name="Wood D."/>
            <person name="de Oliveira M.C."/>
            <person name="Miyaki C.Y."/>
            <person name="Takita M.A."/>
            <person name="da Silva A.C.R."/>
            <person name="Furlan L.R."/>
            <person name="Carraro D.M."/>
            <person name="Camarotte G."/>
            <person name="Almeida N.F. Jr."/>
            <person name="Carrer H."/>
            <person name="Coutinho L.L."/>
            <person name="El-Dorry H.A."/>
            <person name="Ferro M.I.T."/>
            <person name="Gagliardi P.R."/>
            <person name="Giglioti E."/>
            <person name="Goldman M.H.S."/>
            <person name="Goldman G.H."/>
            <person name="Kimura E.T."/>
            <person name="Ferro E.S."/>
            <person name="Kuramae E.E."/>
            <person name="Lemos E.G.M."/>
            <person name="Lemos M.V.F."/>
            <person name="Mauro S.M.Z."/>
            <person name="Machado M.A."/>
            <person name="Marino C.L."/>
            <person name="Menck C.F."/>
            <person name="Nunes L.R."/>
            <person name="Oliveira R.C."/>
            <person name="Pereira G.G."/>
            <person name="Siqueira W."/>
            <person name="de Souza A.A."/>
            <person name="Tsai S.M."/>
            <person name="Zanca A.S."/>
            <person name="Simpson A.J.G."/>
            <person name="Brumbley S.M."/>
            <person name="Setubal J.C."/>
        </authorList>
    </citation>
    <scope>NUCLEOTIDE SEQUENCE [LARGE SCALE GENOMIC DNA]</scope>
    <source>
        <strain>CTCB07</strain>
    </source>
</reference>
<gene>
    <name evidence="1" type="primary">ybeY</name>
    <name type="ordered locus">Lxx14600</name>
</gene>
<evidence type="ECO:0000255" key="1">
    <source>
        <dbReference type="HAMAP-Rule" id="MF_00009"/>
    </source>
</evidence>
<organism>
    <name type="scientific">Leifsonia xyli subsp. xyli (strain CTCB07)</name>
    <dbReference type="NCBI Taxonomy" id="281090"/>
    <lineage>
        <taxon>Bacteria</taxon>
        <taxon>Bacillati</taxon>
        <taxon>Actinomycetota</taxon>
        <taxon>Actinomycetes</taxon>
        <taxon>Micrococcales</taxon>
        <taxon>Microbacteriaceae</taxon>
        <taxon>Leifsonia</taxon>
    </lineage>
</organism>
<feature type="chain" id="PRO_0000102476" description="Endoribonuclease YbeY">
    <location>
        <begin position="1"/>
        <end position="153"/>
    </location>
</feature>
<feature type="binding site" evidence="1">
    <location>
        <position position="116"/>
    </location>
    <ligand>
        <name>Zn(2+)</name>
        <dbReference type="ChEBI" id="CHEBI:29105"/>
        <note>catalytic</note>
    </ligand>
</feature>
<feature type="binding site" evidence="1">
    <location>
        <position position="120"/>
    </location>
    <ligand>
        <name>Zn(2+)</name>
        <dbReference type="ChEBI" id="CHEBI:29105"/>
        <note>catalytic</note>
    </ligand>
</feature>
<feature type="binding site" evidence="1">
    <location>
        <position position="126"/>
    </location>
    <ligand>
        <name>Zn(2+)</name>
        <dbReference type="ChEBI" id="CHEBI:29105"/>
        <note>catalytic</note>
    </ligand>
</feature>
<accession>Q6AEC4</accession>
<sequence>MSIEVNNESAIAADEAKLQRLAGYTFDIMHVHPDAELAILLVDEAAMEQLHVQWMDEPGPTDVLSFPMDELRPGTEDEPSPAGLLGDVVLCPQVAQVQAETTGHTLMDELLLLMTHGILHLLGFDHAEPAEEREMFGIQRDILVGFARYDRQH</sequence>
<keyword id="KW-0963">Cytoplasm</keyword>
<keyword id="KW-0255">Endonuclease</keyword>
<keyword id="KW-0378">Hydrolase</keyword>
<keyword id="KW-0479">Metal-binding</keyword>
<keyword id="KW-0540">Nuclease</keyword>
<keyword id="KW-1185">Reference proteome</keyword>
<keyword id="KW-0690">Ribosome biogenesis</keyword>
<keyword id="KW-0698">rRNA processing</keyword>
<keyword id="KW-0862">Zinc</keyword>